<reference key="1">
    <citation type="journal article" date="2008" name="Nucleic Acids Res.">
        <title>The complete nucleotide sequences of the five genetically distinct plastid genomes of Oenothera, subsection Oenothera: I. Sequence evaluation and plastome evolution.</title>
        <authorList>
            <person name="Greiner S."/>
            <person name="Wang X."/>
            <person name="Rauwolf U."/>
            <person name="Silber M.V."/>
            <person name="Mayer K."/>
            <person name="Meurer J."/>
            <person name="Haberer G."/>
            <person name="Herrmann R.G."/>
        </authorList>
    </citation>
    <scope>NUCLEOTIDE SEQUENCE [LARGE SCALE GENOMIC DNA]</scope>
    <source>
        <strain>cv. Suaveolens Grado</strain>
    </source>
</reference>
<keyword id="KW-0148">Chlorophyll</keyword>
<keyword id="KW-0150">Chloroplast</keyword>
<keyword id="KW-0157">Chromophore</keyword>
<keyword id="KW-0472">Membrane</keyword>
<keyword id="KW-0602">Photosynthesis</keyword>
<keyword id="KW-0604">Photosystem II</keyword>
<keyword id="KW-0934">Plastid</keyword>
<keyword id="KW-0793">Thylakoid</keyword>
<keyword id="KW-0812">Transmembrane</keyword>
<keyword id="KW-1133">Transmembrane helix</keyword>
<evidence type="ECO:0000255" key="1">
    <source>
        <dbReference type="HAMAP-Rule" id="MF_01495"/>
    </source>
</evidence>
<proteinExistence type="inferred from homology"/>
<organism>
    <name type="scientific">Oenothera biennis</name>
    <name type="common">German evening primrose</name>
    <name type="synonym">Onagra biennis</name>
    <dbReference type="NCBI Taxonomy" id="3942"/>
    <lineage>
        <taxon>Eukaryota</taxon>
        <taxon>Viridiplantae</taxon>
        <taxon>Streptophyta</taxon>
        <taxon>Embryophyta</taxon>
        <taxon>Tracheophyta</taxon>
        <taxon>Spermatophyta</taxon>
        <taxon>Magnoliopsida</taxon>
        <taxon>eudicotyledons</taxon>
        <taxon>Gunneridae</taxon>
        <taxon>Pentapetalae</taxon>
        <taxon>rosids</taxon>
        <taxon>malvids</taxon>
        <taxon>Myrtales</taxon>
        <taxon>Onagraceae</taxon>
        <taxon>Onagroideae</taxon>
        <taxon>Onagreae</taxon>
        <taxon>Oenothera</taxon>
    </lineage>
</organism>
<name>PSBB_OENBI</name>
<feature type="chain" id="PRO_0000359847" description="Photosystem II CP47 reaction center protein">
    <location>
        <begin position="1"/>
        <end position="508"/>
    </location>
</feature>
<feature type="transmembrane region" description="Helical" evidence="1">
    <location>
        <begin position="21"/>
        <end position="36"/>
    </location>
</feature>
<feature type="transmembrane region" description="Helical" evidence="1">
    <location>
        <begin position="101"/>
        <end position="115"/>
    </location>
</feature>
<feature type="transmembrane region" description="Helical" evidence="1">
    <location>
        <begin position="140"/>
        <end position="156"/>
    </location>
</feature>
<feature type="transmembrane region" description="Helical" evidence="1">
    <location>
        <begin position="203"/>
        <end position="218"/>
    </location>
</feature>
<feature type="transmembrane region" description="Helical" evidence="1">
    <location>
        <begin position="237"/>
        <end position="252"/>
    </location>
</feature>
<feature type="transmembrane region" description="Helical" evidence="1">
    <location>
        <begin position="457"/>
        <end position="472"/>
    </location>
</feature>
<gene>
    <name evidence="1" type="primary">psbB</name>
</gene>
<dbReference type="EMBL" id="EU262889">
    <property type="protein sequence ID" value="ABW98898.1"/>
    <property type="molecule type" value="Genomic_DNA"/>
</dbReference>
<dbReference type="RefSeq" id="YP_001687393.1">
    <property type="nucleotide sequence ID" value="NC_010361.1"/>
</dbReference>
<dbReference type="SMR" id="B0Z4Y6"/>
<dbReference type="GeneID" id="5952037"/>
<dbReference type="GO" id="GO:0009535">
    <property type="term" value="C:chloroplast thylakoid membrane"/>
    <property type="evidence" value="ECO:0007669"/>
    <property type="project" value="UniProtKB-SubCell"/>
</dbReference>
<dbReference type="GO" id="GO:0009523">
    <property type="term" value="C:photosystem II"/>
    <property type="evidence" value="ECO:0007669"/>
    <property type="project" value="UniProtKB-KW"/>
</dbReference>
<dbReference type="GO" id="GO:0016168">
    <property type="term" value="F:chlorophyll binding"/>
    <property type="evidence" value="ECO:0007669"/>
    <property type="project" value="UniProtKB-UniRule"/>
</dbReference>
<dbReference type="GO" id="GO:0045156">
    <property type="term" value="F:electron transporter, transferring electrons within the cyclic electron transport pathway of photosynthesis activity"/>
    <property type="evidence" value="ECO:0007669"/>
    <property type="project" value="InterPro"/>
</dbReference>
<dbReference type="GO" id="GO:0009772">
    <property type="term" value="P:photosynthetic electron transport in photosystem II"/>
    <property type="evidence" value="ECO:0007669"/>
    <property type="project" value="InterPro"/>
</dbReference>
<dbReference type="FunFam" id="3.10.680.10:FF:000001">
    <property type="entry name" value="Photosystem II CP47 reaction center protein"/>
    <property type="match status" value="1"/>
</dbReference>
<dbReference type="Gene3D" id="3.10.680.10">
    <property type="entry name" value="Photosystem II CP47 reaction center protein"/>
    <property type="match status" value="1"/>
</dbReference>
<dbReference type="HAMAP" id="MF_01495">
    <property type="entry name" value="PSII_PsbB_CP47"/>
    <property type="match status" value="1"/>
</dbReference>
<dbReference type="InterPro" id="IPR000932">
    <property type="entry name" value="PS_antenna-like"/>
</dbReference>
<dbReference type="InterPro" id="IPR036001">
    <property type="entry name" value="PS_II_antenna-like_sf"/>
</dbReference>
<dbReference type="InterPro" id="IPR017486">
    <property type="entry name" value="PSII_PsbB"/>
</dbReference>
<dbReference type="NCBIfam" id="TIGR03039">
    <property type="entry name" value="PS_II_CP47"/>
    <property type="match status" value="1"/>
</dbReference>
<dbReference type="PANTHER" id="PTHR33180">
    <property type="entry name" value="PHOTOSYSTEM II CP43 REACTION CENTER PROTEIN"/>
    <property type="match status" value="1"/>
</dbReference>
<dbReference type="PANTHER" id="PTHR33180:SF35">
    <property type="entry name" value="PHOTOSYSTEM II CP47 REACTION CENTER PROTEIN"/>
    <property type="match status" value="1"/>
</dbReference>
<dbReference type="Pfam" id="PF00421">
    <property type="entry name" value="PSII"/>
    <property type="match status" value="1"/>
</dbReference>
<dbReference type="SUPFAM" id="SSF161077">
    <property type="entry name" value="Photosystem II antenna protein-like"/>
    <property type="match status" value="1"/>
</dbReference>
<protein>
    <recommendedName>
        <fullName evidence="1">Photosystem II CP47 reaction center protein</fullName>
    </recommendedName>
    <alternativeName>
        <fullName evidence="1">PSII 47 kDa protein</fullName>
    </alternativeName>
    <alternativeName>
        <fullName evidence="1">Protein CP-47</fullName>
    </alternativeName>
</protein>
<comment type="function">
    <text evidence="1">One of the components of the core complex of photosystem II (PSII). It binds chlorophyll and helps catalyze the primary light-induced photochemical processes of PSII. PSII is a light-driven water:plastoquinone oxidoreductase, using light energy to abstract electrons from H(2)O, generating O(2) and a proton gradient subsequently used for ATP formation.</text>
</comment>
<comment type="cofactor">
    <text evidence="1">Binds multiple chlorophylls. PSII binds additional chlorophylls, carotenoids and specific lipids.</text>
</comment>
<comment type="subunit">
    <text evidence="1">PSII is composed of 1 copy each of membrane proteins PsbA, PsbB, PsbC, PsbD, PsbE, PsbF, PsbH, PsbI, PsbJ, PsbK, PsbL, PsbM, PsbT, PsbX, PsbY, PsbZ, Psb30/Ycf12, at least 3 peripheral proteins of the oxygen-evolving complex and a large number of cofactors. It forms dimeric complexes.</text>
</comment>
<comment type="subcellular location">
    <subcellularLocation>
        <location evidence="1">Plastid</location>
        <location evidence="1">Chloroplast thylakoid membrane</location>
        <topology evidence="1">Multi-pass membrane protein</topology>
    </subcellularLocation>
</comment>
<comment type="similarity">
    <text evidence="1">Belongs to the PsbB/PsbC family. PsbB subfamily.</text>
</comment>
<geneLocation type="chloroplast"/>
<sequence length="508" mass="56012">MGLPWYRVHTVVLNDPGRLLAVHIMHTALVAGWAGSMALYELAVFDPSDPVLDPMWRQGMFVIPFMTRLGITNSWGGWSITGGTVTNPGIWSYEGVAGSHILFSGLCFLAAIWHWVYWDLAIFSDERTGKPSLDLPKIFGIHLFLSGLACFGFGAFHVTGLYGPGIWVSDPYGLTGEVQPVNPAWGVEGFDPFVPGGIASHHIAAGTLGILAGLFHLSVRPPQRLYKGLRMGNIETVLSSSIAAVFFAAFVVAGTMWYGSATTPIELFGPTRYQWDQGYFQQEIYRRVGAGLAKNQSLSEAWSKIPEKLAFYDYIGNNPAKGGLFRAGSMDSGDGIAVGWLGHPIFRDKEGRELFVRRMPTFFETFPVVLVDGDGIVRADVPFRRAESKYSVEQVGVTIEFYGGELNGVSYSDPATVKKYARRAQLGEIFELDRATLKSDGVFRSSPRGWFTFGHASFALLFFFGHIWHGARTLFRDVFAGIDPDLDTQVEFGAFQKLGDPTTRRQAV</sequence>
<accession>B0Z4Y6</accession>